<protein>
    <recommendedName>
        <fullName evidence="1">LexA repressor</fullName>
        <ecNumber evidence="1">3.4.21.88</ecNumber>
    </recommendedName>
</protein>
<reference key="1">
    <citation type="submission" date="2006-08" db="EMBL/GenBank/DDBJ databases">
        <title>Complete sequence of chromosome 1 of Burkholderia cenocepacia HI2424.</title>
        <authorList>
            <person name="Copeland A."/>
            <person name="Lucas S."/>
            <person name="Lapidus A."/>
            <person name="Barry K."/>
            <person name="Detter J.C."/>
            <person name="Glavina del Rio T."/>
            <person name="Hammon N."/>
            <person name="Israni S."/>
            <person name="Pitluck S."/>
            <person name="Chain P."/>
            <person name="Malfatti S."/>
            <person name="Shin M."/>
            <person name="Vergez L."/>
            <person name="Schmutz J."/>
            <person name="Larimer F."/>
            <person name="Land M."/>
            <person name="Hauser L."/>
            <person name="Kyrpides N."/>
            <person name="Kim E."/>
            <person name="LiPuma J.J."/>
            <person name="Gonzalez C.F."/>
            <person name="Konstantinidis K."/>
            <person name="Tiedje J.M."/>
            <person name="Richardson P."/>
        </authorList>
    </citation>
    <scope>NUCLEOTIDE SEQUENCE [LARGE SCALE GENOMIC DNA]</scope>
    <source>
        <strain>HI2424</strain>
    </source>
</reference>
<comment type="function">
    <text evidence="1">Represses a number of genes involved in the response to DNA damage (SOS response), including recA and lexA. In the presence of single-stranded DNA, RecA interacts with LexA causing an autocatalytic cleavage which disrupts the DNA-binding part of LexA, leading to derepression of the SOS regulon and eventually DNA repair.</text>
</comment>
<comment type="catalytic activity">
    <reaction evidence="1">
        <text>Hydrolysis of Ala-|-Gly bond in repressor LexA.</text>
        <dbReference type="EC" id="3.4.21.88"/>
    </reaction>
</comment>
<comment type="subunit">
    <text evidence="1">Homodimer.</text>
</comment>
<comment type="similarity">
    <text evidence="1">Belongs to the peptidase S24 family.</text>
</comment>
<feature type="chain" id="PRO_1000001266" description="LexA repressor">
    <location>
        <begin position="1"/>
        <end position="215"/>
    </location>
</feature>
<feature type="DNA-binding region" description="H-T-H motif" evidence="1">
    <location>
        <begin position="28"/>
        <end position="48"/>
    </location>
</feature>
<feature type="active site" description="For autocatalytic cleavage activity" evidence="1">
    <location>
        <position position="133"/>
    </location>
</feature>
<feature type="active site" description="For autocatalytic cleavage activity" evidence="1">
    <location>
        <position position="170"/>
    </location>
</feature>
<feature type="site" description="Cleavage; by autolysis" evidence="1">
    <location>
        <begin position="98"/>
        <end position="99"/>
    </location>
</feature>
<accession>A0K775</accession>
<evidence type="ECO:0000255" key="1">
    <source>
        <dbReference type="HAMAP-Rule" id="MF_00015"/>
    </source>
</evidence>
<proteinExistence type="inferred from homology"/>
<keyword id="KW-0068">Autocatalytic cleavage</keyword>
<keyword id="KW-0227">DNA damage</keyword>
<keyword id="KW-0234">DNA repair</keyword>
<keyword id="KW-0235">DNA replication</keyword>
<keyword id="KW-0238">DNA-binding</keyword>
<keyword id="KW-0378">Hydrolase</keyword>
<keyword id="KW-0678">Repressor</keyword>
<keyword id="KW-0742">SOS response</keyword>
<keyword id="KW-0804">Transcription</keyword>
<keyword id="KW-0805">Transcription regulation</keyword>
<organism>
    <name type="scientific">Burkholderia cenocepacia (strain HI2424)</name>
    <dbReference type="NCBI Taxonomy" id="331272"/>
    <lineage>
        <taxon>Bacteria</taxon>
        <taxon>Pseudomonadati</taxon>
        <taxon>Pseudomonadota</taxon>
        <taxon>Betaproteobacteria</taxon>
        <taxon>Burkholderiales</taxon>
        <taxon>Burkholderiaceae</taxon>
        <taxon>Burkholderia</taxon>
        <taxon>Burkholderia cepacia complex</taxon>
    </lineage>
</organism>
<sequence>MTKLTARQQQVFDLIRRAIERSGFPPTRAEIAAELGFSSPNAAEEHLRALARKGVIELAAGASRGIRLLGIDDAPHQFTLPHAGLMQLSLPLVGRVAAGSPILAQEHISQHYACDPALFTSKPDYLLKVRGLSMRDAGILDGDLLAVQKRTEAKDGQIIVARLGDDVTVKRLMRRPGGLELIAENPDYENIFVKAGSADFALEGIAVGLIRSGEL</sequence>
<name>LEXA_BURCH</name>
<gene>
    <name evidence="1" type="primary">lexA</name>
    <name type="ordered locus">Bcen2424_1600</name>
</gene>
<dbReference type="EC" id="3.4.21.88" evidence="1"/>
<dbReference type="EMBL" id="CP000458">
    <property type="protein sequence ID" value="ABK08352.1"/>
    <property type="molecule type" value="Genomic_DNA"/>
</dbReference>
<dbReference type="RefSeq" id="WP_006476077.1">
    <property type="nucleotide sequence ID" value="NC_008542.1"/>
</dbReference>
<dbReference type="SMR" id="A0K775"/>
<dbReference type="MEROPS" id="S24.001"/>
<dbReference type="GeneID" id="83048371"/>
<dbReference type="KEGG" id="bch:Bcen2424_1600"/>
<dbReference type="HOGENOM" id="CLU_066192_45_3_4"/>
<dbReference type="GO" id="GO:0003677">
    <property type="term" value="F:DNA binding"/>
    <property type="evidence" value="ECO:0007669"/>
    <property type="project" value="UniProtKB-UniRule"/>
</dbReference>
<dbReference type="GO" id="GO:0004252">
    <property type="term" value="F:serine-type endopeptidase activity"/>
    <property type="evidence" value="ECO:0007669"/>
    <property type="project" value="UniProtKB-UniRule"/>
</dbReference>
<dbReference type="GO" id="GO:0006281">
    <property type="term" value="P:DNA repair"/>
    <property type="evidence" value="ECO:0007669"/>
    <property type="project" value="UniProtKB-UniRule"/>
</dbReference>
<dbReference type="GO" id="GO:0006260">
    <property type="term" value="P:DNA replication"/>
    <property type="evidence" value="ECO:0007669"/>
    <property type="project" value="UniProtKB-UniRule"/>
</dbReference>
<dbReference type="GO" id="GO:0045892">
    <property type="term" value="P:negative regulation of DNA-templated transcription"/>
    <property type="evidence" value="ECO:0007669"/>
    <property type="project" value="UniProtKB-UniRule"/>
</dbReference>
<dbReference type="GO" id="GO:0006508">
    <property type="term" value="P:proteolysis"/>
    <property type="evidence" value="ECO:0007669"/>
    <property type="project" value="InterPro"/>
</dbReference>
<dbReference type="GO" id="GO:0009432">
    <property type="term" value="P:SOS response"/>
    <property type="evidence" value="ECO:0007669"/>
    <property type="project" value="UniProtKB-UniRule"/>
</dbReference>
<dbReference type="CDD" id="cd06529">
    <property type="entry name" value="S24_LexA-like"/>
    <property type="match status" value="1"/>
</dbReference>
<dbReference type="FunFam" id="1.10.10.10:FF:000009">
    <property type="entry name" value="LexA repressor"/>
    <property type="match status" value="1"/>
</dbReference>
<dbReference type="FunFam" id="2.10.109.10:FF:000001">
    <property type="entry name" value="LexA repressor"/>
    <property type="match status" value="1"/>
</dbReference>
<dbReference type="Gene3D" id="2.10.109.10">
    <property type="entry name" value="Umud Fragment, subunit A"/>
    <property type="match status" value="1"/>
</dbReference>
<dbReference type="Gene3D" id="1.10.10.10">
    <property type="entry name" value="Winged helix-like DNA-binding domain superfamily/Winged helix DNA-binding domain"/>
    <property type="match status" value="1"/>
</dbReference>
<dbReference type="HAMAP" id="MF_00015">
    <property type="entry name" value="LexA"/>
    <property type="match status" value="1"/>
</dbReference>
<dbReference type="InterPro" id="IPR006200">
    <property type="entry name" value="LexA"/>
</dbReference>
<dbReference type="InterPro" id="IPR039418">
    <property type="entry name" value="LexA-like"/>
</dbReference>
<dbReference type="InterPro" id="IPR036286">
    <property type="entry name" value="LexA/Signal_pep-like_sf"/>
</dbReference>
<dbReference type="InterPro" id="IPR006199">
    <property type="entry name" value="LexA_DNA-bd_dom"/>
</dbReference>
<dbReference type="InterPro" id="IPR050077">
    <property type="entry name" value="LexA_repressor"/>
</dbReference>
<dbReference type="InterPro" id="IPR006197">
    <property type="entry name" value="Peptidase_S24_LexA"/>
</dbReference>
<dbReference type="InterPro" id="IPR015927">
    <property type="entry name" value="Peptidase_S24_S26A/B/C"/>
</dbReference>
<dbReference type="InterPro" id="IPR036388">
    <property type="entry name" value="WH-like_DNA-bd_sf"/>
</dbReference>
<dbReference type="InterPro" id="IPR036390">
    <property type="entry name" value="WH_DNA-bd_sf"/>
</dbReference>
<dbReference type="NCBIfam" id="TIGR00498">
    <property type="entry name" value="lexA"/>
    <property type="match status" value="1"/>
</dbReference>
<dbReference type="PANTHER" id="PTHR33516">
    <property type="entry name" value="LEXA REPRESSOR"/>
    <property type="match status" value="1"/>
</dbReference>
<dbReference type="PANTHER" id="PTHR33516:SF2">
    <property type="entry name" value="LEXA REPRESSOR-RELATED"/>
    <property type="match status" value="1"/>
</dbReference>
<dbReference type="Pfam" id="PF01726">
    <property type="entry name" value="LexA_DNA_bind"/>
    <property type="match status" value="1"/>
</dbReference>
<dbReference type="Pfam" id="PF00717">
    <property type="entry name" value="Peptidase_S24"/>
    <property type="match status" value="1"/>
</dbReference>
<dbReference type="PRINTS" id="PR00726">
    <property type="entry name" value="LEXASERPTASE"/>
</dbReference>
<dbReference type="SUPFAM" id="SSF51306">
    <property type="entry name" value="LexA/Signal peptidase"/>
    <property type="match status" value="1"/>
</dbReference>
<dbReference type="SUPFAM" id="SSF46785">
    <property type="entry name" value="Winged helix' DNA-binding domain"/>
    <property type="match status" value="1"/>
</dbReference>